<protein>
    <recommendedName>
        <fullName evidence="1">Acetylglutamate kinase</fullName>
        <ecNumber evidence="1">2.7.2.8</ecNumber>
    </recommendedName>
    <alternativeName>
        <fullName evidence="1">N-acetyl-L-glutamate 5-phosphotransferase</fullName>
    </alternativeName>
    <alternativeName>
        <fullName evidence="1">NAG kinase</fullName>
        <shortName evidence="1">NAGK</shortName>
    </alternativeName>
</protein>
<sequence>MHTDLRADQKAEVLIEALPWLEEFAGQRIVVKYGGNAMVDDHLKQCFAEDMVFLRQVGLHPIVVHGGGPQISHMLKALGIKSEFKGGLRVTTPEAMDVVRMVLTGKVSRELVGLINAHGPLAVGLSGEDGGLFSAMQRRPIIDGKPTDIGLVGDVVSVDASAVEDLVAAGRIPVVSSVAPNEEDATEVLNVNADSAAAALAAAVGARKLVILTDVDGLYADWPDKNSLIGRIGVENLRDMLPDLESGMRPKMEACVRAIDGGVPQAHIIDGRKPHSILNEIFTSAGIGTMVMPDEGLEMRSSYGY</sequence>
<organism>
    <name type="scientific">Bifidobacterium longum subsp. infantis (strain ATCC 15697 / DSM 20088 / JCM 1222 / NCTC 11817 / S12)</name>
    <dbReference type="NCBI Taxonomy" id="391904"/>
    <lineage>
        <taxon>Bacteria</taxon>
        <taxon>Bacillati</taxon>
        <taxon>Actinomycetota</taxon>
        <taxon>Actinomycetes</taxon>
        <taxon>Bifidobacteriales</taxon>
        <taxon>Bifidobacteriaceae</taxon>
        <taxon>Bifidobacterium</taxon>
    </lineage>
</organism>
<feature type="chain" id="PRO_1000118339" description="Acetylglutamate kinase">
    <location>
        <begin position="1"/>
        <end position="305"/>
    </location>
</feature>
<feature type="binding site" evidence="1">
    <location>
        <begin position="67"/>
        <end position="68"/>
    </location>
    <ligand>
        <name>substrate</name>
    </ligand>
</feature>
<feature type="binding site" evidence="1">
    <location>
        <position position="89"/>
    </location>
    <ligand>
        <name>substrate</name>
    </ligand>
</feature>
<feature type="binding site" evidence="1">
    <location>
        <position position="190"/>
    </location>
    <ligand>
        <name>substrate</name>
    </ligand>
</feature>
<feature type="site" description="Transition state stabilizer" evidence="1">
    <location>
        <position position="32"/>
    </location>
</feature>
<feature type="site" description="Transition state stabilizer" evidence="1">
    <location>
        <position position="251"/>
    </location>
</feature>
<gene>
    <name evidence="1" type="primary">argB</name>
    <name type="ordered locus">Blon_1879</name>
    <name type="ordered locus">BLIJ_1945</name>
</gene>
<keyword id="KW-0028">Amino-acid biosynthesis</keyword>
<keyword id="KW-0055">Arginine biosynthesis</keyword>
<keyword id="KW-0067">ATP-binding</keyword>
<keyword id="KW-0963">Cytoplasm</keyword>
<keyword id="KW-0418">Kinase</keyword>
<keyword id="KW-0547">Nucleotide-binding</keyword>
<keyword id="KW-0808">Transferase</keyword>
<dbReference type="EC" id="2.7.2.8" evidence="1"/>
<dbReference type="EMBL" id="CP001095">
    <property type="protein sequence ID" value="ACJ52953.1"/>
    <property type="molecule type" value="Genomic_DNA"/>
</dbReference>
<dbReference type="EMBL" id="AP010889">
    <property type="protein sequence ID" value="BAJ69524.1"/>
    <property type="molecule type" value="Genomic_DNA"/>
</dbReference>
<dbReference type="SMR" id="B7GTP4"/>
<dbReference type="KEGG" id="bln:Blon_1879"/>
<dbReference type="KEGG" id="blon:BLIJ_1945"/>
<dbReference type="PATRIC" id="fig|391904.8.peg.1950"/>
<dbReference type="HOGENOM" id="CLU_053680_0_0_11"/>
<dbReference type="UniPathway" id="UPA00068">
    <property type="reaction ID" value="UER00107"/>
</dbReference>
<dbReference type="Proteomes" id="UP000001360">
    <property type="component" value="Chromosome"/>
</dbReference>
<dbReference type="GO" id="GO:0005737">
    <property type="term" value="C:cytoplasm"/>
    <property type="evidence" value="ECO:0007669"/>
    <property type="project" value="UniProtKB-SubCell"/>
</dbReference>
<dbReference type="GO" id="GO:0003991">
    <property type="term" value="F:acetylglutamate kinase activity"/>
    <property type="evidence" value="ECO:0007669"/>
    <property type="project" value="UniProtKB-UniRule"/>
</dbReference>
<dbReference type="GO" id="GO:0005524">
    <property type="term" value="F:ATP binding"/>
    <property type="evidence" value="ECO:0007669"/>
    <property type="project" value="UniProtKB-UniRule"/>
</dbReference>
<dbReference type="GO" id="GO:0042450">
    <property type="term" value="P:arginine biosynthetic process via ornithine"/>
    <property type="evidence" value="ECO:0007669"/>
    <property type="project" value="UniProtKB-UniRule"/>
</dbReference>
<dbReference type="GO" id="GO:0006526">
    <property type="term" value="P:L-arginine biosynthetic process"/>
    <property type="evidence" value="ECO:0007669"/>
    <property type="project" value="UniProtKB-UniPathway"/>
</dbReference>
<dbReference type="CDD" id="cd04250">
    <property type="entry name" value="AAK_NAGK-C"/>
    <property type="match status" value="1"/>
</dbReference>
<dbReference type="FunFam" id="3.40.1160.10:FF:000004">
    <property type="entry name" value="Acetylglutamate kinase"/>
    <property type="match status" value="1"/>
</dbReference>
<dbReference type="Gene3D" id="3.40.1160.10">
    <property type="entry name" value="Acetylglutamate kinase-like"/>
    <property type="match status" value="1"/>
</dbReference>
<dbReference type="HAMAP" id="MF_00082">
    <property type="entry name" value="ArgB"/>
    <property type="match status" value="1"/>
</dbReference>
<dbReference type="InterPro" id="IPR036393">
    <property type="entry name" value="AceGlu_kinase-like_sf"/>
</dbReference>
<dbReference type="InterPro" id="IPR004662">
    <property type="entry name" value="AcgluKinase_fam"/>
</dbReference>
<dbReference type="InterPro" id="IPR037528">
    <property type="entry name" value="ArgB"/>
</dbReference>
<dbReference type="InterPro" id="IPR001048">
    <property type="entry name" value="Asp/Glu/Uridylate_kinase"/>
</dbReference>
<dbReference type="InterPro" id="IPR001057">
    <property type="entry name" value="Glu/AcGlu_kinase"/>
</dbReference>
<dbReference type="InterPro" id="IPR041727">
    <property type="entry name" value="NAGK-C"/>
</dbReference>
<dbReference type="NCBIfam" id="TIGR00761">
    <property type="entry name" value="argB"/>
    <property type="match status" value="1"/>
</dbReference>
<dbReference type="PANTHER" id="PTHR23342">
    <property type="entry name" value="N-ACETYLGLUTAMATE SYNTHASE"/>
    <property type="match status" value="1"/>
</dbReference>
<dbReference type="PANTHER" id="PTHR23342:SF0">
    <property type="entry name" value="N-ACETYLGLUTAMATE SYNTHASE, MITOCHONDRIAL"/>
    <property type="match status" value="1"/>
</dbReference>
<dbReference type="Pfam" id="PF00696">
    <property type="entry name" value="AA_kinase"/>
    <property type="match status" value="1"/>
</dbReference>
<dbReference type="PIRSF" id="PIRSF000728">
    <property type="entry name" value="NAGK"/>
    <property type="match status" value="1"/>
</dbReference>
<dbReference type="PRINTS" id="PR00474">
    <property type="entry name" value="GLU5KINASE"/>
</dbReference>
<dbReference type="SUPFAM" id="SSF53633">
    <property type="entry name" value="Carbamate kinase-like"/>
    <property type="match status" value="1"/>
</dbReference>
<accession>B7GTP4</accession>
<accession>E8MLU7</accession>
<comment type="function">
    <text evidence="1">Catalyzes the ATP-dependent phosphorylation of N-acetyl-L-glutamate.</text>
</comment>
<comment type="catalytic activity">
    <reaction evidence="1">
        <text>N-acetyl-L-glutamate + ATP = N-acetyl-L-glutamyl 5-phosphate + ADP</text>
        <dbReference type="Rhea" id="RHEA:14629"/>
        <dbReference type="ChEBI" id="CHEBI:30616"/>
        <dbReference type="ChEBI" id="CHEBI:44337"/>
        <dbReference type="ChEBI" id="CHEBI:57936"/>
        <dbReference type="ChEBI" id="CHEBI:456216"/>
        <dbReference type="EC" id="2.7.2.8"/>
    </reaction>
</comment>
<comment type="pathway">
    <text evidence="1">Amino-acid biosynthesis; L-arginine biosynthesis; N(2)-acetyl-L-ornithine from L-glutamate: step 2/4.</text>
</comment>
<comment type="subcellular location">
    <subcellularLocation>
        <location evidence="1">Cytoplasm</location>
    </subcellularLocation>
</comment>
<comment type="similarity">
    <text evidence="1">Belongs to the acetylglutamate kinase family. ArgB subfamily.</text>
</comment>
<evidence type="ECO:0000255" key="1">
    <source>
        <dbReference type="HAMAP-Rule" id="MF_00082"/>
    </source>
</evidence>
<proteinExistence type="inferred from homology"/>
<reference key="1">
    <citation type="journal article" date="2008" name="Proc. Natl. Acad. Sci. U.S.A.">
        <title>The genome sequence of Bifidobacterium longum subsp. infantis reveals adaptations for milk utilization within the infant microbiome.</title>
        <authorList>
            <person name="Sela D.A."/>
            <person name="Chapman J."/>
            <person name="Adeuya A."/>
            <person name="Kim J.H."/>
            <person name="Chen F."/>
            <person name="Whitehead T.R."/>
            <person name="Lapidus A."/>
            <person name="Rokhsar D.S."/>
            <person name="Lebrilla C.B."/>
            <person name="German J.B."/>
            <person name="Price N.P."/>
            <person name="Richardson P.M."/>
            <person name="Mills D.A."/>
        </authorList>
    </citation>
    <scope>NUCLEOTIDE SEQUENCE [LARGE SCALE GENOMIC DNA]</scope>
    <source>
        <strain>ATCC 15697 / DSM 20088 / JCM 1222 / NCTC 11817 / S12</strain>
    </source>
</reference>
<reference key="2">
    <citation type="journal article" date="2011" name="Nature">
        <title>Bifidobacteria can protect from enteropathogenic infection through production of acetate.</title>
        <authorList>
            <person name="Fukuda S."/>
            <person name="Toh H."/>
            <person name="Hase K."/>
            <person name="Oshima K."/>
            <person name="Nakanishi Y."/>
            <person name="Yoshimura K."/>
            <person name="Tobe T."/>
            <person name="Clarke J.M."/>
            <person name="Topping D.L."/>
            <person name="Suzuki T."/>
            <person name="Taylor T.D."/>
            <person name="Itoh K."/>
            <person name="Kikuchi J."/>
            <person name="Morita H."/>
            <person name="Hattori M."/>
            <person name="Ohno H."/>
        </authorList>
    </citation>
    <scope>NUCLEOTIDE SEQUENCE [LARGE SCALE GENOMIC DNA]</scope>
    <source>
        <strain>ATCC 15697 / DSM 20088 / JCM 1222 / NCTC 11817 / S12</strain>
    </source>
</reference>
<name>ARGB_BIFLS</name>